<dbReference type="EC" id="2.7.1.23" evidence="1"/>
<dbReference type="EMBL" id="AE017282">
    <property type="protein sequence ID" value="AAU91896.1"/>
    <property type="molecule type" value="Genomic_DNA"/>
</dbReference>
<dbReference type="RefSeq" id="WP_010961111.1">
    <property type="nucleotide sequence ID" value="NC_002977.6"/>
</dbReference>
<dbReference type="SMR" id="Q607A2"/>
<dbReference type="STRING" id="243233.MCA1859"/>
<dbReference type="GeneID" id="88224104"/>
<dbReference type="KEGG" id="mca:MCA1859"/>
<dbReference type="eggNOG" id="COG0061">
    <property type="taxonomic scope" value="Bacteria"/>
</dbReference>
<dbReference type="HOGENOM" id="CLU_008831_0_1_6"/>
<dbReference type="Proteomes" id="UP000006821">
    <property type="component" value="Chromosome"/>
</dbReference>
<dbReference type="GO" id="GO:0005737">
    <property type="term" value="C:cytoplasm"/>
    <property type="evidence" value="ECO:0007669"/>
    <property type="project" value="UniProtKB-SubCell"/>
</dbReference>
<dbReference type="GO" id="GO:0005524">
    <property type="term" value="F:ATP binding"/>
    <property type="evidence" value="ECO:0007669"/>
    <property type="project" value="UniProtKB-KW"/>
</dbReference>
<dbReference type="GO" id="GO:0046872">
    <property type="term" value="F:metal ion binding"/>
    <property type="evidence" value="ECO:0007669"/>
    <property type="project" value="UniProtKB-UniRule"/>
</dbReference>
<dbReference type="GO" id="GO:0051287">
    <property type="term" value="F:NAD binding"/>
    <property type="evidence" value="ECO:0007669"/>
    <property type="project" value="UniProtKB-ARBA"/>
</dbReference>
<dbReference type="GO" id="GO:0003951">
    <property type="term" value="F:NAD+ kinase activity"/>
    <property type="evidence" value="ECO:0007669"/>
    <property type="project" value="UniProtKB-UniRule"/>
</dbReference>
<dbReference type="GO" id="GO:0019674">
    <property type="term" value="P:NAD metabolic process"/>
    <property type="evidence" value="ECO:0007669"/>
    <property type="project" value="InterPro"/>
</dbReference>
<dbReference type="GO" id="GO:0006741">
    <property type="term" value="P:NADP biosynthetic process"/>
    <property type="evidence" value="ECO:0007669"/>
    <property type="project" value="UniProtKB-UniRule"/>
</dbReference>
<dbReference type="Gene3D" id="3.40.50.10330">
    <property type="entry name" value="Probable inorganic polyphosphate/atp-NAD kinase, domain 1"/>
    <property type="match status" value="1"/>
</dbReference>
<dbReference type="Gene3D" id="2.60.200.30">
    <property type="entry name" value="Probable inorganic polyphosphate/atp-NAD kinase, domain 2"/>
    <property type="match status" value="1"/>
</dbReference>
<dbReference type="HAMAP" id="MF_00361">
    <property type="entry name" value="NAD_kinase"/>
    <property type="match status" value="1"/>
</dbReference>
<dbReference type="InterPro" id="IPR017438">
    <property type="entry name" value="ATP-NAD_kinase_N"/>
</dbReference>
<dbReference type="InterPro" id="IPR017437">
    <property type="entry name" value="ATP-NAD_kinase_PpnK-typ_C"/>
</dbReference>
<dbReference type="InterPro" id="IPR016064">
    <property type="entry name" value="NAD/diacylglycerol_kinase_sf"/>
</dbReference>
<dbReference type="InterPro" id="IPR002504">
    <property type="entry name" value="NADK"/>
</dbReference>
<dbReference type="NCBIfam" id="NF002306">
    <property type="entry name" value="PRK01231.1"/>
    <property type="match status" value="1"/>
</dbReference>
<dbReference type="PANTHER" id="PTHR20275">
    <property type="entry name" value="NAD KINASE"/>
    <property type="match status" value="1"/>
</dbReference>
<dbReference type="PANTHER" id="PTHR20275:SF0">
    <property type="entry name" value="NAD KINASE"/>
    <property type="match status" value="1"/>
</dbReference>
<dbReference type="Pfam" id="PF01513">
    <property type="entry name" value="NAD_kinase"/>
    <property type="match status" value="1"/>
</dbReference>
<dbReference type="Pfam" id="PF20143">
    <property type="entry name" value="NAD_kinase_C"/>
    <property type="match status" value="1"/>
</dbReference>
<dbReference type="SUPFAM" id="SSF111331">
    <property type="entry name" value="NAD kinase/diacylglycerol kinase-like"/>
    <property type="match status" value="1"/>
</dbReference>
<organism>
    <name type="scientific">Methylococcus capsulatus (strain ATCC 33009 / NCIMB 11132 / Bath)</name>
    <dbReference type="NCBI Taxonomy" id="243233"/>
    <lineage>
        <taxon>Bacteria</taxon>
        <taxon>Pseudomonadati</taxon>
        <taxon>Pseudomonadota</taxon>
        <taxon>Gammaproteobacteria</taxon>
        <taxon>Methylococcales</taxon>
        <taxon>Methylococcaceae</taxon>
        <taxon>Methylococcus</taxon>
    </lineage>
</organism>
<comment type="function">
    <text evidence="1">Involved in the regulation of the intracellular balance of NAD and NADP, and is a key enzyme in the biosynthesis of NADP. Catalyzes specifically the phosphorylation on 2'-hydroxyl of the adenosine moiety of NAD to yield NADP.</text>
</comment>
<comment type="catalytic activity">
    <reaction evidence="1">
        <text>NAD(+) + ATP = ADP + NADP(+) + H(+)</text>
        <dbReference type="Rhea" id="RHEA:18629"/>
        <dbReference type="ChEBI" id="CHEBI:15378"/>
        <dbReference type="ChEBI" id="CHEBI:30616"/>
        <dbReference type="ChEBI" id="CHEBI:57540"/>
        <dbReference type="ChEBI" id="CHEBI:58349"/>
        <dbReference type="ChEBI" id="CHEBI:456216"/>
        <dbReference type="EC" id="2.7.1.23"/>
    </reaction>
</comment>
<comment type="cofactor">
    <cofactor evidence="1">
        <name>a divalent metal cation</name>
        <dbReference type="ChEBI" id="CHEBI:60240"/>
    </cofactor>
</comment>
<comment type="subcellular location">
    <subcellularLocation>
        <location evidence="1">Cytoplasm</location>
    </subcellularLocation>
</comment>
<comment type="similarity">
    <text evidence="1">Belongs to the NAD kinase family.</text>
</comment>
<name>NADK_METCA</name>
<reference key="1">
    <citation type="journal article" date="2004" name="PLoS Biol.">
        <title>Genomic insights into methanotrophy: the complete genome sequence of Methylococcus capsulatus (Bath).</title>
        <authorList>
            <person name="Ward N.L."/>
            <person name="Larsen O."/>
            <person name="Sakwa J."/>
            <person name="Bruseth L."/>
            <person name="Khouri H.M."/>
            <person name="Durkin A.S."/>
            <person name="Dimitrov G."/>
            <person name="Jiang L."/>
            <person name="Scanlan D."/>
            <person name="Kang K.H."/>
            <person name="Lewis M.R."/>
            <person name="Nelson K.E."/>
            <person name="Methe B.A."/>
            <person name="Wu M."/>
            <person name="Heidelberg J.F."/>
            <person name="Paulsen I.T."/>
            <person name="Fouts D.E."/>
            <person name="Ravel J."/>
            <person name="Tettelin H."/>
            <person name="Ren Q."/>
            <person name="Read T.D."/>
            <person name="DeBoy R.T."/>
            <person name="Seshadri R."/>
            <person name="Salzberg S.L."/>
            <person name="Jensen H.B."/>
            <person name="Birkeland N.K."/>
            <person name="Nelson W.C."/>
            <person name="Dodson R.J."/>
            <person name="Grindhaug S.H."/>
            <person name="Holt I.E."/>
            <person name="Eidhammer I."/>
            <person name="Jonasen I."/>
            <person name="Vanaken S."/>
            <person name="Utterback T.R."/>
            <person name="Feldblyum T.V."/>
            <person name="Fraser C.M."/>
            <person name="Lillehaug J.R."/>
            <person name="Eisen J.A."/>
        </authorList>
    </citation>
    <scope>NUCLEOTIDE SEQUENCE [LARGE SCALE GENOMIC DNA]</scope>
    <source>
        <strain>ATCC 33009 / NCIMB 11132 / Bath</strain>
    </source>
</reference>
<evidence type="ECO:0000255" key="1">
    <source>
        <dbReference type="HAMAP-Rule" id="MF_00361"/>
    </source>
</evidence>
<gene>
    <name evidence="1" type="primary">nadK</name>
    <name type="ordered locus">MCA1859</name>
</gene>
<accession>Q607A2</accession>
<keyword id="KW-0067">ATP-binding</keyword>
<keyword id="KW-0963">Cytoplasm</keyword>
<keyword id="KW-0418">Kinase</keyword>
<keyword id="KW-0520">NAD</keyword>
<keyword id="KW-0521">NADP</keyword>
<keyword id="KW-0547">Nucleotide-binding</keyword>
<keyword id="KW-1185">Reference proteome</keyword>
<keyword id="KW-0808">Transferase</keyword>
<proteinExistence type="inferred from homology"/>
<protein>
    <recommendedName>
        <fullName evidence="1">NAD kinase</fullName>
        <ecNumber evidence="1">2.7.1.23</ecNumber>
    </recommendedName>
    <alternativeName>
        <fullName evidence="1">ATP-dependent NAD kinase</fullName>
    </alternativeName>
</protein>
<sequence>MPSQFRTIALIGKPDAPRIADTLAAIHSYLLTSGLEILVEHGCAGLFPRSARTGTMPELARQADIAVVVGGDGTLLGAARSLYAHGVPLVGINLGRLGFLVDISPNEAVDKLHAILSGACRAEERYPLAARLLRNGQTIAQGSAINEVVVHSGSATSMIELETAIDGVFLNSQRSDGLIVSTPTGSTAYALSAGGPILYPTLNATVLAPINPHTLSNRPIVISGDSLVTIAFRPNKEFRAQVSCDNVPFPDVGIEDRIEIRKAERPFRILHPTDYDFFQILRHKLNWSNR</sequence>
<feature type="chain" id="PRO_0000229653" description="NAD kinase">
    <location>
        <begin position="1"/>
        <end position="290"/>
    </location>
</feature>
<feature type="active site" description="Proton acceptor" evidence="1">
    <location>
        <position position="72"/>
    </location>
</feature>
<feature type="binding site" evidence="1">
    <location>
        <begin position="72"/>
        <end position="73"/>
    </location>
    <ligand>
        <name>NAD(+)</name>
        <dbReference type="ChEBI" id="CHEBI:57540"/>
    </ligand>
</feature>
<feature type="binding site" evidence="1">
    <location>
        <begin position="146"/>
        <end position="147"/>
    </location>
    <ligand>
        <name>NAD(+)</name>
        <dbReference type="ChEBI" id="CHEBI:57540"/>
    </ligand>
</feature>
<feature type="binding site" evidence="1">
    <location>
        <position position="174"/>
    </location>
    <ligand>
        <name>NAD(+)</name>
        <dbReference type="ChEBI" id="CHEBI:57540"/>
    </ligand>
</feature>
<feature type="binding site" evidence="1">
    <location>
        <position position="176"/>
    </location>
    <ligand>
        <name>NAD(+)</name>
        <dbReference type="ChEBI" id="CHEBI:57540"/>
    </ligand>
</feature>
<feature type="binding site" evidence="1">
    <location>
        <begin position="187"/>
        <end position="192"/>
    </location>
    <ligand>
        <name>NAD(+)</name>
        <dbReference type="ChEBI" id="CHEBI:57540"/>
    </ligand>
</feature>